<evidence type="ECO:0000250" key="1">
    <source>
        <dbReference type="UniProtKB" id="Q8U1N8"/>
    </source>
</evidence>
<evidence type="ECO:0000269" key="2">
    <source>
    </source>
</evidence>
<evidence type="ECO:0000269" key="3">
    <source>
    </source>
</evidence>
<evidence type="ECO:0000269" key="4">
    <source>
    </source>
</evidence>
<evidence type="ECO:0000269" key="5">
    <source>
    </source>
</evidence>
<evidence type="ECO:0000303" key="6">
    <source>
    </source>
</evidence>
<evidence type="ECO:0000305" key="7"/>
<evidence type="ECO:0000312" key="8">
    <source>
        <dbReference type="EMBL" id="AAK42416.1"/>
    </source>
</evidence>
<evidence type="ECO:0007744" key="9">
    <source>
        <dbReference type="PDB" id="2YGK"/>
    </source>
</evidence>
<evidence type="ECO:0007829" key="10">
    <source>
        <dbReference type="PDB" id="2YGK"/>
    </source>
</evidence>
<gene>
    <name evidence="6" type="primary">nurA</name>
    <name evidence="8" type="ordered locus">SSO2248</name>
</gene>
<protein>
    <recommendedName>
        <fullName evidence="7">DNA double-strand break repair nuclease NurA</fullName>
        <ecNumber evidence="4">3.1.-.-</ecNumber>
    </recommendedName>
</protein>
<comment type="function">
    <text evidence="1 2 4">Involved in DNA double-strand break (DSB) repair (PubMed:22135300). Probably acts with HerA to stimulate resection of the 5' strand and produce the long 3' single-strand that is required for RadA loading (By similarity). NurA and HerA together stimulate the end-resection of six nucleotides of a linear DNA substrate (PubMed:26560692). Processes linear double-stranded (ds)DNA probes with 3' or 5' single-stranded overhangs or blunt ends (PubMed:22135300, PubMed:26560692). Has endonuclease activity on single-stranded (ss)DNA and nicking activity on dsDNA without HerA as well as 5'- and 3'-exonuclease activity on ssDNA (PubMed:26560692). Binds ssDNA, dsDNA, forked and bubble DNA equally well (PubMed:26560692).</text>
</comment>
<comment type="cofactor">
    <cofactor evidence="4">
        <name>Mn(2+)</name>
        <dbReference type="ChEBI" id="CHEBI:29035"/>
    </cofactor>
</comment>
<comment type="activity regulation">
    <text evidence="2 4">Nuclease activity requires the presence of HerA (PubMed:22135300). Another report shows endo- and exonuclease activity in the absence of HerA; HerA stimulates the exo- but not endonuclease (PubMed:26560692, PubMed:29488113). LhrC-Core (Hel112) inhibits the exonuclease activity of the HerA-NurA complex on ss- and dsDNA, has no effect on the nicking activity of NurA (PubMed:29488113). Endo- and exonuclease activities are inhibited by ATP; ATP may subtract divalent ions from the reaction preventing nuclease activity, HerA can alleviate ATP inhibition (PubMed:26560692).</text>
</comment>
<comment type="subunit">
    <text evidence="2 3 4 5">Homodimer (PubMed:22135300, PubMed:25447518, PubMed:26560692). Forms a complex with HerA (PubMed:22135300, PubMed:25447518, PubMed:26560692).</text>
</comment>
<comment type="interaction">
    <interactant intactId="EBI-10110462">
        <id>Q97WH1</id>
    </interactant>
    <interactant intactId="EBI-10110451">
        <id>Q97WG8</id>
        <label>herA</label>
    </interactant>
    <organismsDiffer>false</organismsDiffer>
    <experiments>3</experiments>
</comment>
<comment type="similarity">
    <text evidence="7">Belongs to the NurA family.</text>
</comment>
<feature type="chain" id="PRO_0000434029" description="DNA double-strand break repair nuclease NurA">
    <location>
        <begin position="1"/>
        <end position="339"/>
    </location>
</feature>
<feature type="binding site" evidence="1">
    <location>
        <position position="58"/>
    </location>
    <ligand>
        <name>Mn(2+)</name>
        <dbReference type="ChEBI" id="CHEBI:29035"/>
    </ligand>
</feature>
<feature type="binding site" evidence="1">
    <location>
        <position position="133"/>
    </location>
    <ligand>
        <name>Mn(2+)</name>
        <dbReference type="ChEBI" id="CHEBI:29035"/>
    </ligand>
</feature>
<feature type="mutagenesis site" description="Loss of exonuclease but not endonuclease activity." evidence="4">
    <original>D</original>
    <variation>A</variation>
    <location>
        <position position="58"/>
    </location>
</feature>
<feature type="mutagenesis site" description="Interacts with HerA but lacks activity." evidence="2">
    <original>K</original>
    <variation>A</variation>
    <location>
        <position position="202"/>
    </location>
</feature>
<feature type="mutagenesis site" description="Does not interact with HerA. Does not affect dimerization. Strong decrease in nucleolytic activity." evidence="2">
    <original>I</original>
    <variation>E</variation>
    <location>
        <position position="295"/>
    </location>
</feature>
<feature type="mutagenesis site" description="Decreases interaction with HerA. Does not affect dimerization. Decreases nucleolytic activity." evidence="2">
    <original>F</original>
    <variation>E</variation>
    <location>
        <position position="300"/>
    </location>
</feature>
<feature type="helix" evidence="10">
    <location>
        <begin position="3"/>
        <end position="9"/>
    </location>
</feature>
<feature type="helix" evidence="10">
    <location>
        <begin position="17"/>
        <end position="38"/>
    </location>
</feature>
<feature type="strand" evidence="10">
    <location>
        <begin position="39"/>
        <end position="41"/>
    </location>
</feature>
<feature type="strand" evidence="10">
    <location>
        <begin position="54"/>
        <end position="65"/>
    </location>
</feature>
<feature type="strand" evidence="10">
    <location>
        <begin position="70"/>
        <end position="82"/>
    </location>
</feature>
<feature type="strand" evidence="10">
    <location>
        <begin position="85"/>
        <end position="98"/>
    </location>
</feature>
<feature type="helix" evidence="10">
    <location>
        <begin position="104"/>
        <end position="123"/>
    </location>
</feature>
<feature type="helix" evidence="10">
    <location>
        <begin position="124"/>
        <end position="126"/>
    </location>
</feature>
<feature type="strand" evidence="10">
    <location>
        <begin position="127"/>
        <end position="134"/>
    </location>
</feature>
<feature type="helix" evidence="10">
    <location>
        <begin position="136"/>
        <end position="140"/>
    </location>
</feature>
<feature type="helix" evidence="10">
    <location>
        <begin position="151"/>
        <end position="159"/>
    </location>
</feature>
<feature type="helix" evidence="10">
    <location>
        <begin position="162"/>
        <end position="166"/>
    </location>
</feature>
<feature type="helix" evidence="10">
    <location>
        <begin position="171"/>
        <end position="193"/>
    </location>
</feature>
<feature type="helix" evidence="10">
    <location>
        <begin position="194"/>
        <end position="196"/>
    </location>
</feature>
<feature type="strand" evidence="10">
    <location>
        <begin position="197"/>
        <end position="202"/>
    </location>
</feature>
<feature type="turn" evidence="10">
    <location>
        <begin position="208"/>
        <end position="210"/>
    </location>
</feature>
<feature type="strand" evidence="10">
    <location>
        <begin position="212"/>
        <end position="214"/>
    </location>
</feature>
<feature type="helix" evidence="10">
    <location>
        <begin position="216"/>
        <end position="223"/>
    </location>
</feature>
<feature type="strand" evidence="10">
    <location>
        <begin position="226"/>
        <end position="230"/>
    </location>
</feature>
<feature type="strand" evidence="10">
    <location>
        <begin position="233"/>
        <end position="236"/>
    </location>
</feature>
<feature type="helix" evidence="10">
    <location>
        <begin position="248"/>
        <end position="251"/>
    </location>
</feature>
<feature type="strand" evidence="10">
    <location>
        <begin position="255"/>
        <end position="264"/>
    </location>
</feature>
<feature type="strand" evidence="10">
    <location>
        <begin position="270"/>
        <end position="276"/>
    </location>
</feature>
<feature type="helix" evidence="10">
    <location>
        <begin position="280"/>
        <end position="291"/>
    </location>
</feature>
<feature type="helix" evidence="10">
    <location>
        <begin position="300"/>
        <end position="309"/>
    </location>
</feature>
<feature type="helix" evidence="10">
    <location>
        <begin position="313"/>
        <end position="330"/>
    </location>
</feature>
<name>NURA_SACS2</name>
<accession>Q97WH1</accession>
<keyword id="KW-0002">3D-structure</keyword>
<keyword id="KW-0227">DNA damage</keyword>
<keyword id="KW-0234">DNA repair</keyword>
<keyword id="KW-0238">DNA-binding</keyword>
<keyword id="KW-0255">Endonuclease</keyword>
<keyword id="KW-0269">Exonuclease</keyword>
<keyword id="KW-0378">Hydrolase</keyword>
<keyword id="KW-0464">Manganese</keyword>
<keyword id="KW-0479">Metal-binding</keyword>
<keyword id="KW-0540">Nuclease</keyword>
<keyword id="KW-1185">Reference proteome</keyword>
<sequence length="339" mass="39125">MIRKIYDKLVESHNEIKNQIYNIANYLKQEIQDKVNEYWNEYVINHEQSETCKFVAIDGGSFGRPMRIGIVYAVGAESVIGDNKGVKTLSEDGQIGIFKPGNDAQERISLLMEALELSLALRDGSKGDYILMDGSLSKKIGNKVDIQQFSDEELKLIRNVDLNGIISIKDERKMRDLLMLLNQFLVSKIIEEYDGNVLWISKVSRGRDLFGTDYPDITVLELFTEKRGFSKLIIKNIDIEKISEIPEIEVLRKMEYTTFYTRLDNGKRVIRVDIVGRVDEKIVKEIMDRLSGVSIKGYPFPLLKAHMDVRFSAMDREKIIKLVGSKLHKDIEWWPSQFY</sequence>
<proteinExistence type="evidence at protein level"/>
<dbReference type="EC" id="3.1.-.-" evidence="4"/>
<dbReference type="EMBL" id="AE006641">
    <property type="protein sequence ID" value="AAK42416.1"/>
    <property type="molecule type" value="Genomic_DNA"/>
</dbReference>
<dbReference type="PIR" id="A90395">
    <property type="entry name" value="A90395"/>
</dbReference>
<dbReference type="RefSeq" id="WP_009991544.1">
    <property type="nucleotide sequence ID" value="NC_002754.1"/>
</dbReference>
<dbReference type="PDB" id="2YGK">
    <property type="method" value="X-ray"/>
    <property type="resolution" value="2.50 A"/>
    <property type="chains" value="A/B=1-339"/>
</dbReference>
<dbReference type="PDBsum" id="2YGK"/>
<dbReference type="EMDB" id="EMD-2808"/>
<dbReference type="SMR" id="Q97WH1"/>
<dbReference type="IntAct" id="Q97WH1">
    <property type="interactions" value="1"/>
</dbReference>
<dbReference type="MINT" id="Q97WH1"/>
<dbReference type="STRING" id="273057.SSO2248"/>
<dbReference type="PaxDb" id="273057-SSO2248"/>
<dbReference type="EnsemblBacteria" id="AAK42416">
    <property type="protein sequence ID" value="AAK42416"/>
    <property type="gene ID" value="SSO2248"/>
</dbReference>
<dbReference type="GeneID" id="44127982"/>
<dbReference type="KEGG" id="sso:SSO2248"/>
<dbReference type="PATRIC" id="fig|273057.12.peg.2343"/>
<dbReference type="eggNOG" id="arCOG00367">
    <property type="taxonomic scope" value="Archaea"/>
</dbReference>
<dbReference type="HOGENOM" id="CLU_835811_0_0_2"/>
<dbReference type="InParanoid" id="Q97WH1"/>
<dbReference type="EvolutionaryTrace" id="Q97WH1"/>
<dbReference type="Proteomes" id="UP000001974">
    <property type="component" value="Chromosome"/>
</dbReference>
<dbReference type="GO" id="GO:0046872">
    <property type="term" value="F:metal ion binding"/>
    <property type="evidence" value="ECO:0007669"/>
    <property type="project" value="UniProtKB-KW"/>
</dbReference>
<dbReference type="GO" id="GO:0004518">
    <property type="term" value="F:nuclease activity"/>
    <property type="evidence" value="ECO:0007669"/>
    <property type="project" value="UniProtKB-KW"/>
</dbReference>
<dbReference type="GO" id="GO:0006281">
    <property type="term" value="P:DNA repair"/>
    <property type="evidence" value="ECO:0007669"/>
    <property type="project" value="UniProtKB-KW"/>
</dbReference>
<dbReference type="InterPro" id="IPR053461">
    <property type="entry name" value="DSB_repair_nuclease_NurA"/>
</dbReference>
<dbReference type="InterPro" id="IPR018977">
    <property type="entry name" value="NurA_domain"/>
</dbReference>
<dbReference type="NCBIfam" id="NF041033">
    <property type="entry name" value="NurA_Sulf"/>
    <property type="match status" value="1"/>
</dbReference>
<dbReference type="Pfam" id="PF09376">
    <property type="entry name" value="NurA"/>
    <property type="match status" value="1"/>
</dbReference>
<dbReference type="SMART" id="SM00933">
    <property type="entry name" value="NurA"/>
    <property type="match status" value="1"/>
</dbReference>
<organism>
    <name type="scientific">Saccharolobus solfataricus (strain ATCC 35092 / DSM 1617 / JCM 11322 / P2)</name>
    <name type="common">Sulfolobus solfataricus</name>
    <dbReference type="NCBI Taxonomy" id="273057"/>
    <lineage>
        <taxon>Archaea</taxon>
        <taxon>Thermoproteota</taxon>
        <taxon>Thermoprotei</taxon>
        <taxon>Sulfolobales</taxon>
        <taxon>Sulfolobaceae</taxon>
        <taxon>Saccharolobus</taxon>
    </lineage>
</organism>
<reference key="1">
    <citation type="journal article" date="2001" name="Proc. Natl. Acad. Sci. U.S.A.">
        <title>The complete genome of the crenarchaeon Sulfolobus solfataricus P2.</title>
        <authorList>
            <person name="She Q."/>
            <person name="Singh R.K."/>
            <person name="Confalonieri F."/>
            <person name="Zivanovic Y."/>
            <person name="Allard G."/>
            <person name="Awayez M.J."/>
            <person name="Chan-Weiher C.C.-Y."/>
            <person name="Clausen I.G."/>
            <person name="Curtis B.A."/>
            <person name="De Moors A."/>
            <person name="Erauso G."/>
            <person name="Fletcher C."/>
            <person name="Gordon P.M.K."/>
            <person name="Heikamp-de Jong I."/>
            <person name="Jeffries A.C."/>
            <person name="Kozera C.J."/>
            <person name="Medina N."/>
            <person name="Peng X."/>
            <person name="Thi-Ngoc H.P."/>
            <person name="Redder P."/>
            <person name="Schenk M.E."/>
            <person name="Theriault C."/>
            <person name="Tolstrup N."/>
            <person name="Charlebois R.L."/>
            <person name="Doolittle W.F."/>
            <person name="Duguet M."/>
            <person name="Gaasterland T."/>
            <person name="Garrett R.A."/>
            <person name="Ragan M.A."/>
            <person name="Sensen C.W."/>
            <person name="Van der Oost J."/>
        </authorList>
    </citation>
    <scope>NUCLEOTIDE SEQUENCE [LARGE SCALE GENOMIC DNA]</scope>
    <source>
        <strain>ATCC 35092 / DSM 1617 / JCM 11322 / P2</strain>
    </source>
</reference>
<reference key="2">
    <citation type="journal article" date="2014" name="FEBS Lett.">
        <title>Molecular architecture of the HerA-NurA DNA double-strand break resection complex.</title>
        <authorList>
            <person name="Byrne R.T."/>
            <person name="Schuller J.M."/>
            <person name="Unverdorben P."/>
            <person name="Foerster F."/>
            <person name="Hopfner K.P."/>
        </authorList>
    </citation>
    <scope>SUBUNIT</scope>
    <scope>INTERACTION WITH HERA</scope>
    <source>
        <strain>ATCC 35092 / DSM 1617 / JCM 11322 / P2</strain>
    </source>
</reference>
<reference key="3">
    <citation type="journal article" date="2015" name="PLoS ONE">
        <title>NurA Is Endowed with Endo- and Exonuclease Activities that Are Modulated by HerA: New Insight into Their Role in DNA-End Processing.</title>
        <authorList>
            <person name="De Falco M."/>
            <person name="Catalano F."/>
            <person name="Rossi M."/>
            <person name="Ciaramella M."/>
            <person name="De Felice M."/>
        </authorList>
    </citation>
    <scope>FUNCTION AS AN ENDONUCLEASE</scope>
    <scope>FUNCTION AS AN EXONUCLEASE</scope>
    <scope>ACTIVITY REGULATION</scope>
    <scope>COFACTOR</scope>
    <scope>SUBUNIT</scope>
    <scope>DNA-BINDING</scope>
    <scope>MUTAGENESIS OF ASP-58</scope>
</reference>
<reference key="4">
    <citation type="journal article" date="2018" name="Extremophiles">
        <title>The Sulfolobus solfataricus RecQ-like DNA helicase Hel112 inhibits the NurA/HerA complex exonuclease activity.</title>
        <authorList>
            <person name="De Falco M."/>
            <person name="Massa F."/>
            <person name="Rossi M."/>
            <person name="De Felice M."/>
        </authorList>
    </citation>
    <scope>FUNCTION AS AN ENDO- AND EXONUCLEASE</scope>
    <scope>ACTIVITY REGULATION</scope>
    <source>
        <strain>ATCC 35092 / DSM 1617 / JCM 11322 / P2</strain>
    </source>
</reference>
<reference evidence="9" key="5">
    <citation type="journal article" date="2012" name="Nucleic Acids Res.">
        <title>Structural and functional insights into DNA-end processing by the archaeal HerA helicase-NurA nuclease complex.</title>
        <authorList>
            <person name="Blackwood J.K."/>
            <person name="Rzechorzek N.J."/>
            <person name="Abrams A.S."/>
            <person name="Maman J.D."/>
            <person name="Pellegrini L."/>
            <person name="Robinson N.P."/>
        </authorList>
    </citation>
    <scope>X-RAY CRYSTALLOGRAPHY (2.50 ANGSTROMS)</scope>
    <scope>FUNCTION</scope>
    <scope>ACTIVITY REGULATION</scope>
    <scope>SUBUNIT</scope>
    <scope>INTERACTION WITH HERA</scope>
    <scope>MUTAGENESIS OF LYS-202; ILE-295 AND PHE-300</scope>
    <source>
        <strain>ATCC 35092 / DSM 1617 / JCM 11322 / P2</strain>
    </source>
</reference>